<accession>A9WYG6</accession>
<dbReference type="EC" id="2.3.1.31" evidence="1"/>
<dbReference type="EMBL" id="CP000912">
    <property type="protein sequence ID" value="ABY39482.1"/>
    <property type="molecule type" value="Genomic_DNA"/>
</dbReference>
<dbReference type="SMR" id="A9WYG6"/>
<dbReference type="KEGG" id="bmt:BSUIS_B0486"/>
<dbReference type="HOGENOM" id="CLU_057851_0_1_5"/>
<dbReference type="UniPathway" id="UPA00051">
    <property type="reaction ID" value="UER00074"/>
</dbReference>
<dbReference type="Proteomes" id="UP000008545">
    <property type="component" value="Chromosome II"/>
</dbReference>
<dbReference type="GO" id="GO:0005737">
    <property type="term" value="C:cytoplasm"/>
    <property type="evidence" value="ECO:0007669"/>
    <property type="project" value="UniProtKB-SubCell"/>
</dbReference>
<dbReference type="GO" id="GO:0004414">
    <property type="term" value="F:homoserine O-acetyltransferase activity"/>
    <property type="evidence" value="ECO:0007669"/>
    <property type="project" value="UniProtKB-EC"/>
</dbReference>
<dbReference type="GO" id="GO:0008899">
    <property type="term" value="F:homoserine O-succinyltransferase activity"/>
    <property type="evidence" value="ECO:0007669"/>
    <property type="project" value="UniProtKB-UniRule"/>
</dbReference>
<dbReference type="GO" id="GO:0019281">
    <property type="term" value="P:L-methionine biosynthetic process from homoserine via O-succinyl-L-homoserine and cystathionine"/>
    <property type="evidence" value="ECO:0007669"/>
    <property type="project" value="InterPro"/>
</dbReference>
<dbReference type="CDD" id="cd03131">
    <property type="entry name" value="GATase1_HTS"/>
    <property type="match status" value="1"/>
</dbReference>
<dbReference type="Gene3D" id="3.40.50.880">
    <property type="match status" value="1"/>
</dbReference>
<dbReference type="HAMAP" id="MF_00295">
    <property type="entry name" value="MetA_acyltransf"/>
    <property type="match status" value="1"/>
</dbReference>
<dbReference type="InterPro" id="IPR029062">
    <property type="entry name" value="Class_I_gatase-like"/>
</dbReference>
<dbReference type="InterPro" id="IPR005697">
    <property type="entry name" value="HST_MetA"/>
</dbReference>
<dbReference type="InterPro" id="IPR033752">
    <property type="entry name" value="MetA_family"/>
</dbReference>
<dbReference type="NCBIfam" id="TIGR01001">
    <property type="entry name" value="metA"/>
    <property type="match status" value="1"/>
</dbReference>
<dbReference type="PANTHER" id="PTHR20919">
    <property type="entry name" value="HOMOSERINE O-SUCCINYLTRANSFERASE"/>
    <property type="match status" value="1"/>
</dbReference>
<dbReference type="PANTHER" id="PTHR20919:SF0">
    <property type="entry name" value="HOMOSERINE O-SUCCINYLTRANSFERASE"/>
    <property type="match status" value="1"/>
</dbReference>
<dbReference type="Pfam" id="PF04204">
    <property type="entry name" value="HTS"/>
    <property type="match status" value="1"/>
</dbReference>
<dbReference type="PIRSF" id="PIRSF000450">
    <property type="entry name" value="H_ser_succinyltr"/>
    <property type="match status" value="1"/>
</dbReference>
<dbReference type="SUPFAM" id="SSF52317">
    <property type="entry name" value="Class I glutamine amidotransferase-like"/>
    <property type="match status" value="1"/>
</dbReference>
<proteinExistence type="inferred from homology"/>
<name>METAA_BRUSI</name>
<comment type="function">
    <text evidence="1">Transfers an acetyl group from acetyl-CoA to L-homoserine, forming acetyl-L-homoserine.</text>
</comment>
<comment type="catalytic activity">
    <reaction evidence="1">
        <text>L-homoserine + acetyl-CoA = O-acetyl-L-homoserine + CoA</text>
        <dbReference type="Rhea" id="RHEA:13701"/>
        <dbReference type="ChEBI" id="CHEBI:57287"/>
        <dbReference type="ChEBI" id="CHEBI:57288"/>
        <dbReference type="ChEBI" id="CHEBI:57476"/>
        <dbReference type="ChEBI" id="CHEBI:57716"/>
        <dbReference type="EC" id="2.3.1.31"/>
    </reaction>
</comment>
<comment type="pathway">
    <text evidence="1">Amino-acid biosynthesis; L-methionine biosynthesis via de novo pathway; O-acetyl-L-homoserine from L-homoserine: step 1/1.</text>
</comment>
<comment type="subcellular location">
    <subcellularLocation>
        <location evidence="1">Cytoplasm</location>
    </subcellularLocation>
</comment>
<comment type="similarity">
    <text evidence="1">Belongs to the MetA family.</text>
</comment>
<sequence length="306" mass="35245">MPIKIPDDLPATSVLEAEGVMVMREADAVRQDIRPLRIGLLNLMPNKVTTETQIARLLGATPLQVELTLVRMTNHVARHTPADHMLSFYCPWEEVNDQRFDGFVITGAPVERLPFEEVTYWDEMRRVFDWTQSHVHRTLNICWAAQAAVYHFHGMKKYDLPAKASGVFRQRSLVPASPYLRGFSDDFAIPVSRWTEVRKSDIPADSGLKVLVDSTETGLCLLDDPRHRSLHMFNHVEYDTTSLADEYFRDIQVQPEAKVPVNYFPGDDAKRPPENRWRSHAHLLFGNWINEMYQSTPYDIERIGKV</sequence>
<reference key="1">
    <citation type="submission" date="2007-12" db="EMBL/GenBank/DDBJ databases">
        <title>Brucella suis ATCC 23445 whole genome shotgun sequencing project.</title>
        <authorList>
            <person name="Setubal J.C."/>
            <person name="Bowns C."/>
            <person name="Boyle S."/>
            <person name="Crasta O.R."/>
            <person name="Czar M.J."/>
            <person name="Dharmanolla C."/>
            <person name="Gillespie J.J."/>
            <person name="Kenyon R.W."/>
            <person name="Lu J."/>
            <person name="Mane S."/>
            <person name="Mohapatra S."/>
            <person name="Nagrani S."/>
            <person name="Purkayastha A."/>
            <person name="Rajasimha H.K."/>
            <person name="Shallom J.M."/>
            <person name="Shallom S."/>
            <person name="Shukla M."/>
            <person name="Snyder E.E."/>
            <person name="Sobral B.W."/>
            <person name="Wattam A.R."/>
            <person name="Will R."/>
            <person name="Williams K."/>
            <person name="Yoo H."/>
            <person name="Bruce D."/>
            <person name="Detter C."/>
            <person name="Munk C."/>
            <person name="Brettin T.S."/>
        </authorList>
    </citation>
    <scope>NUCLEOTIDE SEQUENCE [LARGE SCALE GENOMIC DNA]</scope>
    <source>
        <strain>ATCC 23445 / NCTC 10510</strain>
    </source>
</reference>
<feature type="chain" id="PRO_1000078928" description="Homoserine O-acetyltransferase">
    <location>
        <begin position="1"/>
        <end position="306"/>
    </location>
</feature>
<feature type="active site" description="Acyl-thioester intermediate" evidence="1">
    <location>
        <position position="142"/>
    </location>
</feature>
<feature type="active site" description="Proton acceptor" evidence="1">
    <location>
        <position position="235"/>
    </location>
</feature>
<feature type="active site" evidence="1">
    <location>
        <position position="237"/>
    </location>
</feature>
<feature type="binding site" evidence="1">
    <location>
        <position position="163"/>
    </location>
    <ligand>
        <name>substrate</name>
    </ligand>
</feature>
<feature type="binding site" evidence="1">
    <location>
        <position position="192"/>
    </location>
    <ligand>
        <name>substrate</name>
    </ligand>
</feature>
<feature type="binding site" evidence="1">
    <location>
        <position position="249"/>
    </location>
    <ligand>
        <name>substrate</name>
    </ligand>
</feature>
<feature type="site" description="Important for acyl-CoA specificity" evidence="1">
    <location>
        <position position="111"/>
    </location>
</feature>
<feature type="site" description="Important for substrate specificity" evidence="1">
    <location>
        <position position="192"/>
    </location>
</feature>
<organism>
    <name type="scientific">Brucella suis (strain ATCC 23445 / NCTC 10510)</name>
    <dbReference type="NCBI Taxonomy" id="470137"/>
    <lineage>
        <taxon>Bacteria</taxon>
        <taxon>Pseudomonadati</taxon>
        <taxon>Pseudomonadota</taxon>
        <taxon>Alphaproteobacteria</taxon>
        <taxon>Hyphomicrobiales</taxon>
        <taxon>Brucellaceae</taxon>
        <taxon>Brucella/Ochrobactrum group</taxon>
        <taxon>Brucella</taxon>
    </lineage>
</organism>
<keyword id="KW-0012">Acyltransferase</keyword>
<keyword id="KW-0028">Amino-acid biosynthesis</keyword>
<keyword id="KW-0963">Cytoplasm</keyword>
<keyword id="KW-0486">Methionine biosynthesis</keyword>
<keyword id="KW-0808">Transferase</keyword>
<evidence type="ECO:0000255" key="1">
    <source>
        <dbReference type="HAMAP-Rule" id="MF_00295"/>
    </source>
</evidence>
<gene>
    <name evidence="1" type="primary">metAA</name>
    <name type="ordered locus">BSUIS_B0486</name>
</gene>
<protein>
    <recommendedName>
        <fullName evidence="1">Homoserine O-acetyltransferase</fullName>
        <shortName evidence="1">HAT</shortName>
        <ecNumber evidence="1">2.3.1.31</ecNumber>
    </recommendedName>
    <alternativeName>
        <fullName evidence="1">Homoserine transacetylase</fullName>
        <shortName evidence="1">HTA</shortName>
    </alternativeName>
</protein>